<reference key="1">
    <citation type="journal article" date="2010" name="Genome Biol. Evol.">
        <title>Continuing evolution of Burkholderia mallei through genome reduction and large-scale rearrangements.</title>
        <authorList>
            <person name="Losada L."/>
            <person name="Ronning C.M."/>
            <person name="DeShazer D."/>
            <person name="Woods D."/>
            <person name="Fedorova N."/>
            <person name="Kim H.S."/>
            <person name="Shabalina S.A."/>
            <person name="Pearson T.R."/>
            <person name="Brinkac L."/>
            <person name="Tan P."/>
            <person name="Nandi T."/>
            <person name="Crabtree J."/>
            <person name="Badger J."/>
            <person name="Beckstrom-Sternberg S."/>
            <person name="Saqib M."/>
            <person name="Schutzer S.E."/>
            <person name="Keim P."/>
            <person name="Nierman W.C."/>
        </authorList>
    </citation>
    <scope>NUCLEOTIDE SEQUENCE [LARGE SCALE GENOMIC DNA]</scope>
    <source>
        <strain>668</strain>
    </source>
</reference>
<dbReference type="EC" id="1.3.3.3" evidence="1"/>
<dbReference type="EMBL" id="CP000570">
    <property type="protein sequence ID" value="ABN85031.1"/>
    <property type="molecule type" value="Genomic_DNA"/>
</dbReference>
<dbReference type="RefSeq" id="WP_004526433.1">
    <property type="nucleotide sequence ID" value="NC_009074.1"/>
</dbReference>
<dbReference type="SMR" id="A3N7F7"/>
<dbReference type="GeneID" id="93059643"/>
<dbReference type="KEGG" id="bpd:BURPS668_1229"/>
<dbReference type="HOGENOM" id="CLU_026169_0_1_4"/>
<dbReference type="UniPathway" id="UPA00251">
    <property type="reaction ID" value="UER00322"/>
</dbReference>
<dbReference type="GO" id="GO:0005737">
    <property type="term" value="C:cytoplasm"/>
    <property type="evidence" value="ECO:0007669"/>
    <property type="project" value="UniProtKB-SubCell"/>
</dbReference>
<dbReference type="GO" id="GO:0004109">
    <property type="term" value="F:coproporphyrinogen oxidase activity"/>
    <property type="evidence" value="ECO:0007669"/>
    <property type="project" value="UniProtKB-UniRule"/>
</dbReference>
<dbReference type="GO" id="GO:0046872">
    <property type="term" value="F:metal ion binding"/>
    <property type="evidence" value="ECO:0007669"/>
    <property type="project" value="UniProtKB-KW"/>
</dbReference>
<dbReference type="GO" id="GO:0042803">
    <property type="term" value="F:protein homodimerization activity"/>
    <property type="evidence" value="ECO:0000250"/>
    <property type="project" value="UniProtKB"/>
</dbReference>
<dbReference type="GO" id="GO:0006782">
    <property type="term" value="P:protoporphyrinogen IX biosynthetic process"/>
    <property type="evidence" value="ECO:0007669"/>
    <property type="project" value="UniProtKB-UniRule"/>
</dbReference>
<dbReference type="FunFam" id="3.40.1500.10:FF:000001">
    <property type="entry name" value="Oxygen-dependent coproporphyrinogen-III oxidase"/>
    <property type="match status" value="1"/>
</dbReference>
<dbReference type="Gene3D" id="3.40.1500.10">
    <property type="entry name" value="Coproporphyrinogen III oxidase, aerobic"/>
    <property type="match status" value="1"/>
</dbReference>
<dbReference type="HAMAP" id="MF_00333">
    <property type="entry name" value="Coprogen_oxidas"/>
    <property type="match status" value="1"/>
</dbReference>
<dbReference type="InterPro" id="IPR001260">
    <property type="entry name" value="Coprogen_oxidase_aer"/>
</dbReference>
<dbReference type="InterPro" id="IPR036406">
    <property type="entry name" value="Coprogen_oxidase_aer_sf"/>
</dbReference>
<dbReference type="InterPro" id="IPR018375">
    <property type="entry name" value="Coprogen_oxidase_CS"/>
</dbReference>
<dbReference type="NCBIfam" id="NF003727">
    <property type="entry name" value="PRK05330.1"/>
    <property type="match status" value="1"/>
</dbReference>
<dbReference type="PANTHER" id="PTHR10755">
    <property type="entry name" value="COPROPORPHYRINOGEN III OXIDASE, MITOCHONDRIAL"/>
    <property type="match status" value="1"/>
</dbReference>
<dbReference type="PANTHER" id="PTHR10755:SF0">
    <property type="entry name" value="OXYGEN-DEPENDENT COPROPORPHYRINOGEN-III OXIDASE, MITOCHONDRIAL"/>
    <property type="match status" value="1"/>
</dbReference>
<dbReference type="Pfam" id="PF01218">
    <property type="entry name" value="Coprogen_oxidas"/>
    <property type="match status" value="1"/>
</dbReference>
<dbReference type="PIRSF" id="PIRSF000166">
    <property type="entry name" value="Coproporphyri_ox"/>
    <property type="match status" value="1"/>
</dbReference>
<dbReference type="PRINTS" id="PR00073">
    <property type="entry name" value="COPRGNOXDASE"/>
</dbReference>
<dbReference type="SUPFAM" id="SSF102886">
    <property type="entry name" value="Coproporphyrinogen III oxidase"/>
    <property type="match status" value="1"/>
</dbReference>
<dbReference type="PROSITE" id="PS01021">
    <property type="entry name" value="COPROGEN_OXIDASE"/>
    <property type="match status" value="1"/>
</dbReference>
<keyword id="KW-0963">Cytoplasm</keyword>
<keyword id="KW-0350">Heme biosynthesis</keyword>
<keyword id="KW-0479">Metal-binding</keyword>
<keyword id="KW-0560">Oxidoreductase</keyword>
<keyword id="KW-0627">Porphyrin biosynthesis</keyword>
<organism>
    <name type="scientific">Burkholderia pseudomallei (strain 668)</name>
    <dbReference type="NCBI Taxonomy" id="320373"/>
    <lineage>
        <taxon>Bacteria</taxon>
        <taxon>Pseudomonadati</taxon>
        <taxon>Pseudomonadota</taxon>
        <taxon>Betaproteobacteria</taxon>
        <taxon>Burkholderiales</taxon>
        <taxon>Burkholderiaceae</taxon>
        <taxon>Burkholderia</taxon>
        <taxon>pseudomallei group</taxon>
    </lineage>
</organism>
<protein>
    <recommendedName>
        <fullName evidence="1">Oxygen-dependent coproporphyrinogen-III oxidase</fullName>
        <shortName evidence="1">CPO</shortName>
        <shortName evidence="1">Coprogen oxidase</shortName>
        <shortName evidence="1">Coproporphyrinogenase</shortName>
        <ecNumber evidence="1">1.3.3.3</ecNumber>
    </recommendedName>
</protein>
<evidence type="ECO:0000255" key="1">
    <source>
        <dbReference type="HAMAP-Rule" id="MF_00333"/>
    </source>
</evidence>
<feature type="chain" id="PRO_1000019462" description="Oxygen-dependent coproporphyrinogen-III oxidase">
    <location>
        <begin position="1"/>
        <end position="307"/>
    </location>
</feature>
<feature type="region of interest" description="Important for dimerization" evidence="1">
    <location>
        <begin position="247"/>
        <end position="282"/>
    </location>
</feature>
<feature type="active site" description="Proton donor" evidence="1">
    <location>
        <position position="113"/>
    </location>
</feature>
<feature type="binding site" evidence="1">
    <location>
        <position position="99"/>
    </location>
    <ligand>
        <name>substrate</name>
    </ligand>
</feature>
<feature type="binding site" evidence="1">
    <location>
        <position position="103"/>
    </location>
    <ligand>
        <name>a divalent metal cation</name>
        <dbReference type="ChEBI" id="CHEBI:60240"/>
    </ligand>
</feature>
<feature type="binding site" evidence="1">
    <location>
        <position position="113"/>
    </location>
    <ligand>
        <name>a divalent metal cation</name>
        <dbReference type="ChEBI" id="CHEBI:60240"/>
    </ligand>
</feature>
<feature type="binding site" evidence="1">
    <location>
        <begin position="115"/>
        <end position="117"/>
    </location>
    <ligand>
        <name>substrate</name>
    </ligand>
</feature>
<feature type="binding site" evidence="1">
    <location>
        <position position="152"/>
    </location>
    <ligand>
        <name>a divalent metal cation</name>
        <dbReference type="ChEBI" id="CHEBI:60240"/>
    </ligand>
</feature>
<feature type="binding site" evidence="1">
    <location>
        <position position="182"/>
    </location>
    <ligand>
        <name>a divalent metal cation</name>
        <dbReference type="ChEBI" id="CHEBI:60240"/>
    </ligand>
</feature>
<feature type="binding site" evidence="1">
    <location>
        <begin position="265"/>
        <end position="267"/>
    </location>
    <ligand>
        <name>substrate</name>
    </ligand>
</feature>
<feature type="site" description="Important for dimerization" evidence="1">
    <location>
        <position position="182"/>
    </location>
</feature>
<gene>
    <name evidence="1" type="primary">hemF</name>
    <name type="ordered locus">BURPS668_1229</name>
</gene>
<accession>A3N7F7</accession>
<proteinExistence type="inferred from homology"/>
<sequence>MTDSTYDVNRVRAYLQGLQMRIADALGAFDGTPLAADTWRRGPGERLRGGGCTRILEAGGFFERAGIGFSDVAGDALPPSASASRPQLAGRGFEALGVSLVLHPRNPYCPTVHMNVRMLIATKPGEAPVFWFGGGMDLTPIYGFEEDARHFHRTCRAALEPFGAELYPRFKKWCDDYFFLKHRNEARGIGGIFFDDFSELGFERSFEMLQSVGDAFLPSYLPIVERRRDTPYGERERAFQAYRRGRYVEFNLVFDRGTLFGLQSGGRTESILLSMPPTAGWRYDWHPDPGTPEARLQSEFLVPRDWA</sequence>
<comment type="function">
    <text evidence="1">Involved in the heme biosynthesis. Catalyzes the aerobic oxidative decarboxylation of propionate groups of rings A and B of coproporphyrinogen-III to yield the vinyl groups in protoporphyrinogen-IX.</text>
</comment>
<comment type="catalytic activity">
    <reaction evidence="1">
        <text>coproporphyrinogen III + O2 + 2 H(+) = protoporphyrinogen IX + 2 CO2 + 2 H2O</text>
        <dbReference type="Rhea" id="RHEA:18257"/>
        <dbReference type="ChEBI" id="CHEBI:15377"/>
        <dbReference type="ChEBI" id="CHEBI:15378"/>
        <dbReference type="ChEBI" id="CHEBI:15379"/>
        <dbReference type="ChEBI" id="CHEBI:16526"/>
        <dbReference type="ChEBI" id="CHEBI:57307"/>
        <dbReference type="ChEBI" id="CHEBI:57309"/>
        <dbReference type="EC" id="1.3.3.3"/>
    </reaction>
</comment>
<comment type="cofactor">
    <cofactor evidence="1">
        <name>a divalent metal cation</name>
        <dbReference type="ChEBI" id="CHEBI:60240"/>
    </cofactor>
</comment>
<comment type="pathway">
    <text evidence="1">Porphyrin-containing compound metabolism; protoporphyrin-IX biosynthesis; protoporphyrinogen-IX from coproporphyrinogen-III (O2 route): step 1/1.</text>
</comment>
<comment type="subunit">
    <text evidence="1">Homodimer.</text>
</comment>
<comment type="subcellular location">
    <subcellularLocation>
        <location evidence="1">Cytoplasm</location>
    </subcellularLocation>
</comment>
<comment type="similarity">
    <text evidence="1">Belongs to the aerobic coproporphyrinogen-III oxidase family.</text>
</comment>
<name>HEM6_BURP6</name>